<feature type="chain" id="PRO_1000002187" description="SsrA-binding protein">
    <location>
        <begin position="1"/>
        <end position="160"/>
    </location>
</feature>
<name>SSRP_YERE8</name>
<reference key="1">
    <citation type="journal article" date="2006" name="PLoS Genet.">
        <title>The complete genome sequence and comparative genome analysis of the high pathogenicity Yersinia enterocolitica strain 8081.</title>
        <authorList>
            <person name="Thomson N.R."/>
            <person name="Howard S."/>
            <person name="Wren B.W."/>
            <person name="Holden M.T.G."/>
            <person name="Crossman L."/>
            <person name="Challis G.L."/>
            <person name="Churcher C."/>
            <person name="Mungall K."/>
            <person name="Brooks K."/>
            <person name="Chillingworth T."/>
            <person name="Feltwell T."/>
            <person name="Abdellah Z."/>
            <person name="Hauser H."/>
            <person name="Jagels K."/>
            <person name="Maddison M."/>
            <person name="Moule S."/>
            <person name="Sanders M."/>
            <person name="Whitehead S."/>
            <person name="Quail M.A."/>
            <person name="Dougan G."/>
            <person name="Parkhill J."/>
            <person name="Prentice M.B."/>
        </authorList>
    </citation>
    <scope>NUCLEOTIDE SEQUENCE [LARGE SCALE GENOMIC DNA]</scope>
    <source>
        <strain>NCTC 13174 / 8081</strain>
    </source>
</reference>
<evidence type="ECO:0000255" key="1">
    <source>
        <dbReference type="HAMAP-Rule" id="MF_00023"/>
    </source>
</evidence>
<protein>
    <recommendedName>
        <fullName evidence="1">SsrA-binding protein</fullName>
    </recommendedName>
    <alternativeName>
        <fullName evidence="1">Small protein B</fullName>
    </alternativeName>
</protein>
<comment type="function">
    <text evidence="1">Required for rescue of stalled ribosomes mediated by trans-translation. Binds to transfer-messenger RNA (tmRNA), required for stable association of tmRNA with ribosomes. tmRNA and SmpB together mimic tRNA shape, replacing the anticodon stem-loop with SmpB. tmRNA is encoded by the ssrA gene; the 2 termini fold to resemble tRNA(Ala) and it encodes a 'tag peptide', a short internal open reading frame. During trans-translation Ala-aminoacylated tmRNA acts like a tRNA, entering the A-site of stalled ribosomes, displacing the stalled mRNA. The ribosome then switches to translate the ORF on the tmRNA; the nascent peptide is terminated with the 'tag peptide' encoded by the tmRNA and targeted for degradation. The ribosome is freed to recommence translation, which seems to be the essential function of trans-translation.</text>
</comment>
<comment type="subcellular location">
    <subcellularLocation>
        <location evidence="1">Cytoplasm</location>
    </subcellularLocation>
    <text evidence="1">The tmRNA-SmpB complex associates with stalled 70S ribosomes.</text>
</comment>
<comment type="similarity">
    <text evidence="1">Belongs to the SmpB family.</text>
</comment>
<proteinExistence type="inferred from homology"/>
<gene>
    <name evidence="1" type="primary">smpB</name>
    <name type="ordered locus">YE0994</name>
</gene>
<keyword id="KW-0963">Cytoplasm</keyword>
<keyword id="KW-0694">RNA-binding</keyword>
<accession>A1JKI0</accession>
<organism>
    <name type="scientific">Yersinia enterocolitica serotype O:8 / biotype 1B (strain NCTC 13174 / 8081)</name>
    <dbReference type="NCBI Taxonomy" id="393305"/>
    <lineage>
        <taxon>Bacteria</taxon>
        <taxon>Pseudomonadati</taxon>
        <taxon>Pseudomonadota</taxon>
        <taxon>Gammaproteobacteria</taxon>
        <taxon>Enterobacterales</taxon>
        <taxon>Yersiniaceae</taxon>
        <taxon>Yersinia</taxon>
    </lineage>
</organism>
<sequence length="160" mass="18292">MTKKKAYKPGSATIAQNKRARHEYFIEEEFEAGLSLQGWEVKSLRAGKANISDSYVTFRNGEAFLFGATITPLNVASTHVVCEPMRTRKLLLNKRELDSLIGKVNRDGFTVVALSVYWKNAWVKVKIGVAKGKKDHDKRDDIKDREWKLDKARIMKHANR</sequence>
<dbReference type="EMBL" id="AM286415">
    <property type="protein sequence ID" value="CAL11092.1"/>
    <property type="molecule type" value="Genomic_DNA"/>
</dbReference>
<dbReference type="RefSeq" id="WP_005166313.1">
    <property type="nucleotide sequence ID" value="NC_008800.1"/>
</dbReference>
<dbReference type="RefSeq" id="YP_001005327.1">
    <property type="nucleotide sequence ID" value="NC_008800.1"/>
</dbReference>
<dbReference type="SMR" id="A1JKI0"/>
<dbReference type="GeneID" id="93969941"/>
<dbReference type="KEGG" id="yen:YE0994"/>
<dbReference type="PATRIC" id="fig|393305.7.peg.1089"/>
<dbReference type="eggNOG" id="COG0691">
    <property type="taxonomic scope" value="Bacteria"/>
</dbReference>
<dbReference type="HOGENOM" id="CLU_108953_3_0_6"/>
<dbReference type="OrthoDB" id="9805462at2"/>
<dbReference type="Proteomes" id="UP000000642">
    <property type="component" value="Chromosome"/>
</dbReference>
<dbReference type="GO" id="GO:0005829">
    <property type="term" value="C:cytosol"/>
    <property type="evidence" value="ECO:0007669"/>
    <property type="project" value="TreeGrafter"/>
</dbReference>
<dbReference type="GO" id="GO:0003723">
    <property type="term" value="F:RNA binding"/>
    <property type="evidence" value="ECO:0007669"/>
    <property type="project" value="UniProtKB-UniRule"/>
</dbReference>
<dbReference type="GO" id="GO:0070929">
    <property type="term" value="P:trans-translation"/>
    <property type="evidence" value="ECO:0007669"/>
    <property type="project" value="UniProtKB-UniRule"/>
</dbReference>
<dbReference type="CDD" id="cd09294">
    <property type="entry name" value="SmpB"/>
    <property type="match status" value="1"/>
</dbReference>
<dbReference type="Gene3D" id="2.40.280.10">
    <property type="match status" value="1"/>
</dbReference>
<dbReference type="HAMAP" id="MF_00023">
    <property type="entry name" value="SmpB"/>
    <property type="match status" value="1"/>
</dbReference>
<dbReference type="InterPro" id="IPR023620">
    <property type="entry name" value="SmpB"/>
</dbReference>
<dbReference type="InterPro" id="IPR000037">
    <property type="entry name" value="SsrA-bd_prot"/>
</dbReference>
<dbReference type="InterPro" id="IPR020081">
    <property type="entry name" value="SsrA-bd_prot_CS"/>
</dbReference>
<dbReference type="NCBIfam" id="NF003843">
    <property type="entry name" value="PRK05422.1"/>
    <property type="match status" value="1"/>
</dbReference>
<dbReference type="NCBIfam" id="TIGR00086">
    <property type="entry name" value="smpB"/>
    <property type="match status" value="1"/>
</dbReference>
<dbReference type="PANTHER" id="PTHR30308:SF2">
    <property type="entry name" value="SSRA-BINDING PROTEIN"/>
    <property type="match status" value="1"/>
</dbReference>
<dbReference type="PANTHER" id="PTHR30308">
    <property type="entry name" value="TMRNA-BINDING COMPONENT OF TRANS-TRANSLATION TAGGING COMPLEX"/>
    <property type="match status" value="1"/>
</dbReference>
<dbReference type="Pfam" id="PF01668">
    <property type="entry name" value="SmpB"/>
    <property type="match status" value="1"/>
</dbReference>
<dbReference type="SUPFAM" id="SSF74982">
    <property type="entry name" value="Small protein B (SmpB)"/>
    <property type="match status" value="1"/>
</dbReference>
<dbReference type="PROSITE" id="PS01317">
    <property type="entry name" value="SSRP"/>
    <property type="match status" value="1"/>
</dbReference>